<proteinExistence type="evidence at protein level"/>
<keyword id="KW-0002">3D-structure</keyword>
<keyword id="KW-0027">Amidation</keyword>
<keyword id="KW-0903">Direct protein sequencing</keyword>
<keyword id="KW-1015">Disulfide bond</keyword>
<keyword id="KW-0528">Neurotoxin</keyword>
<keyword id="KW-0964">Secreted</keyword>
<keyword id="KW-0800">Toxin</keyword>
<reference key="1">
    <citation type="journal article" date="2012" name="Peptides">
        <title>Pc16a, the first characterized peptide from Conus pictus venom, shows a novel disulfide connectivity.</title>
        <authorList>
            <person name="Van Der Haegen A."/>
            <person name="Peigneur S."/>
            <person name="Dyubankova N."/>
            <person name="Moller C."/>
            <person name="Mari F."/>
            <person name="Diego-Garcia E."/>
            <person name="Naude R."/>
            <person name="Lescrinier E."/>
            <person name="Herdewijn P."/>
            <person name="Tytgat J."/>
        </authorList>
    </citation>
    <scope>PROTEIN SEQUENCE</scope>
    <scope>POTENTIAL FUNCTION</scope>
    <scope>DISULFIDE BOND</scope>
    <scope>MASS SPECTROMETRY</scope>
    <scope>DOMAIN</scope>
    <scope>AMIDATION AT CYS-11</scope>
    <scope>STRUCTURE BY NMR</scope>
    <scope>SUBCELLULAR LOCATION</scope>
    <source>
        <tissue>Venom</tissue>
    </source>
</reference>
<reference key="2">
    <citation type="journal article" date="2013" name="Peptides">
        <title>Unraveling the peptidome of the South African cone snails Conus pictus and Conus natalis.</title>
        <authorList>
            <person name="Peigneur S."/>
            <person name="Van Der Haegen A."/>
            <person name="Moller C."/>
            <person name="Waelkens E."/>
            <person name="Diego-Garcia E."/>
            <person name="Mari F."/>
            <person name="Naude R."/>
            <person name="Tytgat J."/>
        </authorList>
    </citation>
    <scope>PROTEIN SEQUENCE</scope>
    <scope>SUBCELLULAR LOCATION</scope>
    <scope>MASS SPECTROMETRY</scope>
    <source>
        <tissue>Venom</tissue>
    </source>
</reference>
<accession>P86942</accession>
<accession>I3NI55</accession>
<organism>
    <name type="scientific">Conus pictus</name>
    <name type="common">Cone snail</name>
    <dbReference type="NCBI Taxonomy" id="1042615"/>
    <lineage>
        <taxon>Eukaryota</taxon>
        <taxon>Metazoa</taxon>
        <taxon>Spiralia</taxon>
        <taxon>Lophotrochozoa</taxon>
        <taxon>Mollusca</taxon>
        <taxon>Gastropoda</taxon>
        <taxon>Caenogastropoda</taxon>
        <taxon>Neogastropoda</taxon>
        <taxon>Conoidea</taxon>
        <taxon>Conidae</taxon>
        <taxon>Conus</taxon>
        <taxon>Sciteconus</taxon>
    </lineage>
</organism>
<sequence length="11" mass="1264">SCSCKRNFLCC</sequence>
<evidence type="ECO:0000269" key="1">
    <source>
    </source>
</evidence>
<evidence type="ECO:0000269" key="2">
    <source>
    </source>
</evidence>
<evidence type="ECO:0000303" key="3">
    <source>
    </source>
</evidence>
<evidence type="ECO:0000305" key="4"/>
<evidence type="ECO:0000305" key="5">
    <source>
    </source>
</evidence>
<evidence type="ECO:0000305" key="6">
    <source>
    </source>
</evidence>
<evidence type="ECO:0007744" key="7">
    <source>
        <dbReference type="PDB" id="2LER"/>
    </source>
</evidence>
<evidence type="ECO:0007829" key="8">
    <source>
        <dbReference type="PDB" id="2LER"/>
    </source>
</evidence>
<name>CUGA_CONPB</name>
<protein>
    <recommendedName>
        <fullName evidence="3">Conotoxin pc16a</fullName>
    </recommendedName>
    <alternativeName>
        <fullName>pc16b</fullName>
    </alternativeName>
</protein>
<feature type="peptide" id="PRO_0000419007" description="Conotoxin pc16a" evidence="1">
    <location>
        <begin position="1"/>
        <end position="11"/>
    </location>
</feature>
<feature type="modified residue" description="Cysteine amide; partial" evidence="1">
    <location>
        <position position="11"/>
    </location>
</feature>
<feature type="disulfide bond" evidence="1 7">
    <location>
        <begin position="2"/>
        <end position="10"/>
    </location>
</feature>
<feature type="disulfide bond" evidence="1 7">
    <location>
        <begin position="4"/>
        <end position="11"/>
    </location>
</feature>
<feature type="turn" evidence="8">
    <location>
        <begin position="4"/>
        <end position="6"/>
    </location>
</feature>
<feature type="helix" evidence="8">
    <location>
        <begin position="8"/>
        <end position="10"/>
    </location>
</feature>
<dbReference type="PDB" id="2LER">
    <property type="method" value="NMR"/>
    <property type="chains" value="A=1-11"/>
</dbReference>
<dbReference type="PDBsum" id="2LER"/>
<dbReference type="SMR" id="P86942"/>
<dbReference type="ConoServer" id="5219">
    <property type="toxin name" value="Pc16a"/>
</dbReference>
<dbReference type="EvolutionaryTrace" id="P86942"/>
<dbReference type="GO" id="GO:0005576">
    <property type="term" value="C:extracellular region"/>
    <property type="evidence" value="ECO:0007669"/>
    <property type="project" value="UniProtKB-SubCell"/>
</dbReference>
<dbReference type="GO" id="GO:0090729">
    <property type="term" value="F:toxin activity"/>
    <property type="evidence" value="ECO:0007669"/>
    <property type="project" value="UniProtKB-KW"/>
</dbReference>
<comment type="function">
    <text evidence="1">Potential neurotoxin. No target has been identified for this peptide.</text>
</comment>
<comment type="subcellular location">
    <subcellularLocation>
        <location evidence="1 2">Secreted</location>
    </subcellularLocation>
</comment>
<comment type="tissue specificity">
    <text evidence="5 6">Expressed by the venom duct.</text>
</comment>
<comment type="domain">
    <text evidence="4">The cysteine framework is XVI (C-C-CC).</text>
</comment>
<comment type="PTM">
    <text evidence="2">Pc16a is the amidated form, whereas Pc16b is the non-amidated form.</text>
</comment>
<comment type="mass spectrometry" mass="1257.6" error="0.7" method="Electrospray" evidence="1 2">
    <text>monoisotopic, amidated form.</text>
</comment>
<comment type="mass spectrometry" mass="1258.6" method="Electrospray" evidence="2">
    <text>monoisotopic, non-amidated form.</text>
</comment>
<comment type="miscellaneous">
    <text evidence="1">Negative results: the native peptide has no effect on nicotinic acetylcholine receptor (nAChR) subtypes human alpha-4-beta-2/CHRNA4-CHRNB2 and chicken alpha-7/CHRNA7. The synthetic peptide has no effect on a wide range of mammalian and insect voltage-gated sodium channels and voltage-gated potassium channels (PubMed:22079220).</text>
</comment>